<sequence length="1057" mass="116233">MDAAGRGCHLLPLPAARGPARAPAAAAAAAASPPGPCSGAACAPSAAAGAGAMNPSSSAGEEKGATGGSSSSGSGAGSCCLGAEGGADPRGAGSAAAAGAAALDEPAAAGQKEKDEALEEKLRNLTFRKQVSYRKAISRAGLQHLAPAHPLSLPVANGPAKEPRATLDWSENAVNGEHLWLETNVSGDLCYLGEENCQVRFAKSALRRKCAVCKIVVHTACIEQLEKINFRCKPTFREGGSRSPRENFVRHHWVHRRRQEGKCKQCGKGFQQKFSFHSKEIVAISCSWCKQAFHNKVTCFMLHHIEEPCSLGAHAAVIVPPTWIIKVKKPQNSLKASNRKKKRTSFKRKASKRGMEQENKGRPFVIKPISSPLMKPLLVFVNPKSGGNQGTKVLQMFMWYLNPRQVFDLSQEGPKDALELYRKVPNLRILACGGDGTVGWILSILDELQLSPQPPVGVLPLGTGNDLARTLNWGGGYTDEPVSKILCQVEDGTVVQLDRWNLHVERNPDLPPEELEDGVCKLPLNVFNNYFSLGFDAHVTLEFHESREANPEKFNSRFRNKMFYAGAAFSDFLQRSSRDLSKHVKVVCDGTDLTPKIQELKFQCIVFLNIPRYCAGTMPWGNPGDHHDFEPQRHDDGYIEVIGFTMASLAALQVGGHGERLHQCREVMLLTYKSIPMQVDGEPCRLAPAMIRISLRNQANMVQKSKRRTSMPLLNDPQSVPDRLRIRVNKISLQDYEGFHYDKEKLREASIPLGILVVRGDCDLETCRMYIDRLQEDLQSVSSGSQRVHYQDHETSFPRALSAQRLSPRWCFLDATSADRFYRIDRSQEHLHFVMEISQDEIFILDPDMVVSQPAGTPPGMPDLVVEQASGISDWWNPALRKRMLSDSGLGMIAPYYEDSDLKDLSHSRVLQSPVSSEDHAILQAVIAGDLMKLIESYKNGGSLLIQGPDHCSLLHYAAKTGNGEIVKYILDHGPSELLDMADSETGETALHKAACQRNRAVCQLLVDAGASLRKTDSKGKTPQERAQQAGDPDLAAYLESRQNYKVIGHEDLETAV</sequence>
<proteinExistence type="evidence at protein level"/>
<accession>O75912</accession>
<accession>A0A087WV00</accession>
<accession>A4D1Q9</accession>
<accession>Q9NZ49</accession>
<organism>
    <name type="scientific">Homo sapiens</name>
    <name type="common">Human</name>
    <dbReference type="NCBI Taxonomy" id="9606"/>
    <lineage>
        <taxon>Eukaryota</taxon>
        <taxon>Metazoa</taxon>
        <taxon>Chordata</taxon>
        <taxon>Craniata</taxon>
        <taxon>Vertebrata</taxon>
        <taxon>Euteleostomi</taxon>
        <taxon>Mammalia</taxon>
        <taxon>Eutheria</taxon>
        <taxon>Euarchontoglires</taxon>
        <taxon>Primates</taxon>
        <taxon>Haplorrhini</taxon>
        <taxon>Catarrhini</taxon>
        <taxon>Hominidae</taxon>
        <taxon>Homo</taxon>
    </lineage>
</organism>
<feature type="chain" id="PRO_0000218466" description="Diacylglycerol kinase iota">
    <location>
        <begin position="1"/>
        <end position="1057"/>
    </location>
</feature>
<feature type="domain" description="DAGKc" evidence="4">
    <location>
        <begin position="372"/>
        <end position="507"/>
    </location>
</feature>
<feature type="repeat" description="ANK 1" evidence="3">
    <location>
        <begin position="950"/>
        <end position="979"/>
    </location>
</feature>
<feature type="repeat" description="ANK 2" evidence="3">
    <location>
        <begin position="986"/>
        <end position="1015"/>
    </location>
</feature>
<feature type="region of interest" description="Disordered" evidence="5">
    <location>
        <begin position="15"/>
        <end position="74"/>
    </location>
</feature>
<feature type="region of interest" description="Disordered" evidence="5">
    <location>
        <begin position="334"/>
        <end position="358"/>
    </location>
</feature>
<feature type="region of interest" description="Disordered" evidence="5">
    <location>
        <begin position="1014"/>
        <end position="1033"/>
    </location>
</feature>
<feature type="short sequence motif" description="PDZ-binding" evidence="2">
    <location>
        <begin position="1055"/>
        <end position="1057"/>
    </location>
</feature>
<feature type="compositionally biased region" description="Low complexity" evidence="5">
    <location>
        <begin position="15"/>
        <end position="59"/>
    </location>
</feature>
<feature type="compositionally biased region" description="Basic residues" evidence="5">
    <location>
        <begin position="337"/>
        <end position="352"/>
    </location>
</feature>
<feature type="compositionally biased region" description="Basic and acidic residues" evidence="5">
    <location>
        <begin position="1014"/>
        <end position="1024"/>
    </location>
</feature>
<feature type="splice variant" id="VSP_062484" description="In isoform 1.">
    <original>I</original>
    <variation>ISDWLRTIAGELVQSFGAI</variation>
    <location>
        <position position="751"/>
    </location>
</feature>
<feature type="splice variant" id="VSP_062485" description="In isoform 1.">
    <location>
        <begin position="815"/>
        <end position="824"/>
    </location>
</feature>
<feature type="sequence variant" id="VAR_010190" description="In dbSNP:rs61757580." evidence="6">
    <original>L</original>
    <variation>F</variation>
    <location>
        <position position="153"/>
    </location>
</feature>
<feature type="sequence conflict" description="In Ref. 4; AAF43006." evidence="12" ref="4">
    <original>A</original>
    <variation>P</variation>
    <location>
        <position position="160"/>
    </location>
</feature>
<gene>
    <name evidence="14" type="primary">DGKI</name>
</gene>
<keyword id="KW-0025">Alternative splicing</keyword>
<keyword id="KW-0040">ANK repeat</keyword>
<keyword id="KW-0067">ATP-binding</keyword>
<keyword id="KW-1003">Cell membrane</keyword>
<keyword id="KW-0966">Cell projection</keyword>
<keyword id="KW-0963">Cytoplasm</keyword>
<keyword id="KW-0968">Cytoplasmic vesicle</keyword>
<keyword id="KW-0418">Kinase</keyword>
<keyword id="KW-0443">Lipid metabolism</keyword>
<keyword id="KW-0472">Membrane</keyword>
<keyword id="KW-0547">Nucleotide-binding</keyword>
<keyword id="KW-0539">Nucleus</keyword>
<keyword id="KW-1267">Proteomics identification</keyword>
<keyword id="KW-1185">Reference proteome</keyword>
<keyword id="KW-0677">Repeat</keyword>
<keyword id="KW-0770">Synapse</keyword>
<keyword id="KW-0808">Transferase</keyword>
<name>DGKI_HUMAN</name>
<evidence type="ECO:0000250" key="1">
    <source>
        <dbReference type="UniProtKB" id="D3YWQ0"/>
    </source>
</evidence>
<evidence type="ECO:0000250" key="2">
    <source>
        <dbReference type="UniProtKB" id="F1MAB7"/>
    </source>
</evidence>
<evidence type="ECO:0000255" key="3"/>
<evidence type="ECO:0000255" key="4">
    <source>
        <dbReference type="PROSITE-ProRule" id="PRU00783"/>
    </source>
</evidence>
<evidence type="ECO:0000256" key="5">
    <source>
        <dbReference type="SAM" id="MobiDB-lite"/>
    </source>
</evidence>
<evidence type="ECO:0000269" key="6">
    <source>
    </source>
</evidence>
<evidence type="ECO:0000269" key="7">
    <source>
    </source>
</evidence>
<evidence type="ECO:0000269" key="8">
    <source>
    </source>
</evidence>
<evidence type="ECO:0000269" key="9">
    <source>
    </source>
</evidence>
<evidence type="ECO:0000269" key="10">
    <source>
    </source>
</evidence>
<evidence type="ECO:0000303" key="11">
    <source>
    </source>
</evidence>
<evidence type="ECO:0000305" key="12"/>
<evidence type="ECO:0000305" key="13">
    <source>
    </source>
</evidence>
<evidence type="ECO:0000312" key="14">
    <source>
        <dbReference type="HGNC" id="HGNC:2855"/>
    </source>
</evidence>
<protein>
    <recommendedName>
        <fullName evidence="11">Diacylglycerol kinase iota</fullName>
        <shortName evidence="13">DAG kinase iota</shortName>
        <shortName evidence="11">DGK-iota</shortName>
        <ecNumber evidence="9 10">2.7.1.107</ecNumber>
    </recommendedName>
</protein>
<reference key="1">
    <citation type="journal article" date="1998" name="J. Biol. Chem.">
        <title>The cloning and characterization of a novel human diacylglycerol kinase, DGK-iota.</title>
        <authorList>
            <person name="Ding L."/>
            <person name="Traer E."/>
            <person name="McIntyre T.M."/>
            <person name="Zimmerman G.A."/>
            <person name="Prescott S.M."/>
        </authorList>
    </citation>
    <scope>NUCLEOTIDE SEQUENCE [MRNA] (ISOFORM 1)</scope>
    <scope>FUNCTION</scope>
    <scope>CATALYTIC ACTIVITY</scope>
    <scope>PATHWAY</scope>
    <scope>SUBCELLULAR LOCATION</scope>
    <scope>TISSUE SPECIFICITY</scope>
    <source>
        <tissue>Retina</tissue>
    </source>
</reference>
<reference key="2">
    <citation type="journal article" date="2003" name="Nature">
        <title>The DNA sequence of human chromosome 7.</title>
        <authorList>
            <person name="Hillier L.W."/>
            <person name="Fulton R.S."/>
            <person name="Fulton L.A."/>
            <person name="Graves T.A."/>
            <person name="Pepin K.H."/>
            <person name="Wagner-McPherson C."/>
            <person name="Layman D."/>
            <person name="Maas J."/>
            <person name="Jaeger S."/>
            <person name="Walker R."/>
            <person name="Wylie K."/>
            <person name="Sekhon M."/>
            <person name="Becker M.C."/>
            <person name="O'Laughlin M.D."/>
            <person name="Schaller M.E."/>
            <person name="Fewell G.A."/>
            <person name="Delehaunty K.D."/>
            <person name="Miner T.L."/>
            <person name="Nash W.E."/>
            <person name="Cordes M."/>
            <person name="Du H."/>
            <person name="Sun H."/>
            <person name="Edwards J."/>
            <person name="Bradshaw-Cordum H."/>
            <person name="Ali J."/>
            <person name="Andrews S."/>
            <person name="Isak A."/>
            <person name="Vanbrunt A."/>
            <person name="Nguyen C."/>
            <person name="Du F."/>
            <person name="Lamar B."/>
            <person name="Courtney L."/>
            <person name="Kalicki J."/>
            <person name="Ozersky P."/>
            <person name="Bielicki L."/>
            <person name="Scott K."/>
            <person name="Holmes A."/>
            <person name="Harkins R."/>
            <person name="Harris A."/>
            <person name="Strong C.M."/>
            <person name="Hou S."/>
            <person name="Tomlinson C."/>
            <person name="Dauphin-Kohlberg S."/>
            <person name="Kozlowicz-Reilly A."/>
            <person name="Leonard S."/>
            <person name="Rohlfing T."/>
            <person name="Rock S.M."/>
            <person name="Tin-Wollam A.-M."/>
            <person name="Abbott A."/>
            <person name="Minx P."/>
            <person name="Maupin R."/>
            <person name="Strowmatt C."/>
            <person name="Latreille P."/>
            <person name="Miller N."/>
            <person name="Johnson D."/>
            <person name="Murray J."/>
            <person name="Woessner J.P."/>
            <person name="Wendl M.C."/>
            <person name="Yang S.-P."/>
            <person name="Schultz B.R."/>
            <person name="Wallis J.W."/>
            <person name="Spieth J."/>
            <person name="Bieri T.A."/>
            <person name="Nelson J.O."/>
            <person name="Berkowicz N."/>
            <person name="Wohldmann P.E."/>
            <person name="Cook L.L."/>
            <person name="Hickenbotham M.T."/>
            <person name="Eldred J."/>
            <person name="Williams D."/>
            <person name="Bedell J.A."/>
            <person name="Mardis E.R."/>
            <person name="Clifton S.W."/>
            <person name="Chissoe S.L."/>
            <person name="Marra M.A."/>
            <person name="Raymond C."/>
            <person name="Haugen E."/>
            <person name="Gillett W."/>
            <person name="Zhou Y."/>
            <person name="James R."/>
            <person name="Phelps K."/>
            <person name="Iadanoto S."/>
            <person name="Bubb K."/>
            <person name="Simms E."/>
            <person name="Levy R."/>
            <person name="Clendenning J."/>
            <person name="Kaul R."/>
            <person name="Kent W.J."/>
            <person name="Furey T.S."/>
            <person name="Baertsch R.A."/>
            <person name="Brent M.R."/>
            <person name="Keibler E."/>
            <person name="Flicek P."/>
            <person name="Bork P."/>
            <person name="Suyama M."/>
            <person name="Bailey J.A."/>
            <person name="Portnoy M.E."/>
            <person name="Torrents D."/>
            <person name="Chinwalla A.T."/>
            <person name="Gish W.R."/>
            <person name="Eddy S.R."/>
            <person name="McPherson J.D."/>
            <person name="Olson M.V."/>
            <person name="Eichler E.E."/>
            <person name="Green E.D."/>
            <person name="Waterston R.H."/>
            <person name="Wilson R.K."/>
        </authorList>
    </citation>
    <scope>NUCLEOTIDE SEQUENCE [LARGE SCALE GENOMIC DNA]</scope>
</reference>
<reference key="3">
    <citation type="journal article" date="2003" name="Science">
        <title>Human chromosome 7: DNA sequence and biology.</title>
        <authorList>
            <person name="Scherer S.W."/>
            <person name="Cheung J."/>
            <person name="MacDonald J.R."/>
            <person name="Osborne L.R."/>
            <person name="Nakabayashi K."/>
            <person name="Herbrick J.-A."/>
            <person name="Carson A.R."/>
            <person name="Parker-Katiraee L."/>
            <person name="Skaug J."/>
            <person name="Khaja R."/>
            <person name="Zhang J."/>
            <person name="Hudek A.K."/>
            <person name="Li M."/>
            <person name="Haddad M."/>
            <person name="Duggan G.E."/>
            <person name="Fernandez B.A."/>
            <person name="Kanematsu E."/>
            <person name="Gentles S."/>
            <person name="Christopoulos C.C."/>
            <person name="Choufani S."/>
            <person name="Kwasnicka D."/>
            <person name="Zheng X.H."/>
            <person name="Lai Z."/>
            <person name="Nusskern D.R."/>
            <person name="Zhang Q."/>
            <person name="Gu Z."/>
            <person name="Lu F."/>
            <person name="Zeesman S."/>
            <person name="Nowaczyk M.J."/>
            <person name="Teshima I."/>
            <person name="Chitayat D."/>
            <person name="Shuman C."/>
            <person name="Weksberg R."/>
            <person name="Zackai E.H."/>
            <person name="Grebe T.A."/>
            <person name="Cox S.R."/>
            <person name="Kirkpatrick S.J."/>
            <person name="Rahman N."/>
            <person name="Friedman J.M."/>
            <person name="Heng H.H.Q."/>
            <person name="Pelicci P.G."/>
            <person name="Lo-Coco F."/>
            <person name="Belloni E."/>
            <person name="Shaffer L.G."/>
            <person name="Pober B."/>
            <person name="Morton C.C."/>
            <person name="Gusella J.F."/>
            <person name="Bruns G.A.P."/>
            <person name="Korf B.R."/>
            <person name="Quade B.J."/>
            <person name="Ligon A.H."/>
            <person name="Ferguson H."/>
            <person name="Higgins A.W."/>
            <person name="Leach N.T."/>
            <person name="Herrick S.R."/>
            <person name="Lemyre E."/>
            <person name="Farra C.G."/>
            <person name="Kim H.-G."/>
            <person name="Summers A.M."/>
            <person name="Gripp K.W."/>
            <person name="Roberts W."/>
            <person name="Szatmari P."/>
            <person name="Winsor E.J.T."/>
            <person name="Grzeschik K.-H."/>
            <person name="Teebi A."/>
            <person name="Minassian B.A."/>
            <person name="Kere J."/>
            <person name="Armengol L."/>
            <person name="Pujana M.A."/>
            <person name="Estivill X."/>
            <person name="Wilson M.D."/>
            <person name="Koop B.F."/>
            <person name="Tosi S."/>
            <person name="Moore G.E."/>
            <person name="Boright A.P."/>
            <person name="Zlotorynski E."/>
            <person name="Kerem B."/>
            <person name="Kroisel P.M."/>
            <person name="Petek E."/>
            <person name="Oscier D.G."/>
            <person name="Mould S.J."/>
            <person name="Doehner H."/>
            <person name="Doehner K."/>
            <person name="Rommens J.M."/>
            <person name="Vincent J.B."/>
            <person name="Venter J.C."/>
            <person name="Li P.W."/>
            <person name="Mural R.J."/>
            <person name="Adams M.D."/>
            <person name="Tsui L.-C."/>
        </authorList>
    </citation>
    <scope>NUCLEOTIDE SEQUENCE [LARGE SCALE GENOMIC DNA]</scope>
</reference>
<reference key="4">
    <citation type="journal article" date="2000" name="Mol. Vis.">
        <title>Evaluation of human diacylglycerol kinase iota, DGKI, a homolog of Drosophila rdgA, in inherited retinopathy mapping to 7q.</title>
        <authorList>
            <person name="Bowne S.J."/>
            <person name="Sullivan L.S."/>
            <person name="Ding L."/>
            <person name="Traer E."/>
            <person name="Prescott S.M."/>
            <person name="Birch D.G."/>
            <person name="Kennan A."/>
            <person name="Humphries P."/>
            <person name="Daiger S.P."/>
        </authorList>
    </citation>
    <scope>NUCLEOTIDE SEQUENCE [GENOMIC DNA] OF 135-1057 (ISOFORM 1)</scope>
    <scope>VARIANT PHE-153</scope>
</reference>
<reference key="5">
    <citation type="journal article" date="2005" name="Proc. Natl. Acad. Sci. U.S.A.">
        <title>Diacylglycerol kinase iota regulates Ras guanyl-releasing protein 3 and inhibits Rap1 signaling.</title>
        <authorList>
            <person name="Regier D.S."/>
            <person name="Higbee J."/>
            <person name="Lund K.M."/>
            <person name="Sakane F."/>
            <person name="Prescott S.M."/>
            <person name="Topham M.K."/>
        </authorList>
    </citation>
    <scope>TISSUE SPECIFICITY</scope>
</reference>
<reference key="6">
    <citation type="journal article" date="2011" name="EMBO J.">
        <title>DGKiota regulates presynaptic release during mGluR-dependent LTD.</title>
        <authorList>
            <person name="Yang J."/>
            <person name="Seo J."/>
            <person name="Nair R."/>
            <person name="Han S."/>
            <person name="Jang S."/>
            <person name="Kim K."/>
            <person name="Han K."/>
            <person name="Paik S.K."/>
            <person name="Choi J."/>
            <person name="Lee S."/>
            <person name="Bae Y.C."/>
            <person name="Topham M.K."/>
            <person name="Prescott S.M."/>
            <person name="Rhee J.S."/>
            <person name="Choi S.Y."/>
            <person name="Kim E."/>
        </authorList>
    </citation>
    <scope>INTERACTION WITH DLG4</scope>
</reference>
<reference key="7">
    <citation type="journal article" date="2013" name="Pharmacology">
        <title>Evaluations of the selectivities of the diacylglycerol kinase inhibitors R59022 and R59949 among diacylglycerol kinase isozymes using a new non-radioactive assay method.</title>
        <authorList>
            <person name="Sato M."/>
            <person name="Liu K."/>
            <person name="Sasaki S."/>
            <person name="Kunii N."/>
            <person name="Sakai H."/>
            <person name="Mizuno H."/>
            <person name="Saga H."/>
            <person name="Sakane F."/>
        </authorList>
    </citation>
    <scope>FUNCTION</scope>
    <scope>CATALYTIC ACTIVITY</scope>
</reference>
<comment type="function">
    <text evidence="1 9 10 12">Diacylglycerol kinase that converts diacylglycerol/DAG into phosphatidic acid/phosphatidate/PA and regulates the respective levels of these two bioactive lipids (PubMed:23949095, PubMed:9830018). Thereby, acts as a central switch between the signaling pathways activated by these second messengers with different cellular targets and opposite effects in numerous biological processes (Probable). Has probably no preference for any of the diacylglycerols in terms of the acyl chain composition, especially for the acyl chain at the sn-2 position (PubMed:9830018). By controlling the diacylglycerol/DAG-mediated activation of RASGRP3, negatively regulates the Rap1 signaling pathway. May play a role in presynaptic diacylglycerol/DAG signaling and control neurotransmitter release during metabotropic glutamate receptor-dependent long-term depression (By similarity).</text>
</comment>
<comment type="catalytic activity">
    <reaction evidence="9 10">
        <text>a 1,2-diacyl-sn-glycerol + ATP = a 1,2-diacyl-sn-glycero-3-phosphate + ADP + H(+)</text>
        <dbReference type="Rhea" id="RHEA:10272"/>
        <dbReference type="ChEBI" id="CHEBI:15378"/>
        <dbReference type="ChEBI" id="CHEBI:17815"/>
        <dbReference type="ChEBI" id="CHEBI:30616"/>
        <dbReference type="ChEBI" id="CHEBI:58608"/>
        <dbReference type="ChEBI" id="CHEBI:456216"/>
        <dbReference type="EC" id="2.7.1.107"/>
    </reaction>
    <physiologicalReaction direction="left-to-right" evidence="13">
        <dbReference type="Rhea" id="RHEA:10273"/>
    </physiologicalReaction>
</comment>
<comment type="catalytic activity">
    <reaction evidence="9 10">
        <text>1,2-di-(9Z-octadecenoyl)-sn-glycerol + ATP = 1,2-di-(9Z-octadecenoyl)-sn-glycero-3-phosphate + ADP + H(+)</text>
        <dbReference type="Rhea" id="RHEA:40327"/>
        <dbReference type="ChEBI" id="CHEBI:15378"/>
        <dbReference type="ChEBI" id="CHEBI:30616"/>
        <dbReference type="ChEBI" id="CHEBI:52333"/>
        <dbReference type="ChEBI" id="CHEBI:74546"/>
        <dbReference type="ChEBI" id="CHEBI:456216"/>
    </reaction>
    <physiologicalReaction direction="left-to-right" evidence="13">
        <dbReference type="Rhea" id="RHEA:40328"/>
    </physiologicalReaction>
</comment>
<comment type="catalytic activity">
    <reaction evidence="10">
        <text>1-octadecanoyl-2-(5Z,8Z,11Z,14Z-eicosatetraenoyl)-sn-glycerol + ATP = 1-octadecanoyl-2-(5Z,8Z,11Z,14Z-eicosatetraenoyl)-sn-glycero-3-phosphate + ADP + H(+)</text>
        <dbReference type="Rhea" id="RHEA:40323"/>
        <dbReference type="ChEBI" id="CHEBI:15378"/>
        <dbReference type="ChEBI" id="CHEBI:30616"/>
        <dbReference type="ChEBI" id="CHEBI:75728"/>
        <dbReference type="ChEBI" id="CHEBI:77091"/>
        <dbReference type="ChEBI" id="CHEBI:456216"/>
    </reaction>
    <physiologicalReaction direction="left-to-right" evidence="13">
        <dbReference type="Rhea" id="RHEA:40324"/>
    </physiologicalReaction>
</comment>
<comment type="catalytic activity">
    <reaction evidence="2">
        <text>1-octadecanoyl-2-(9Z,12Z)-octadecadienoyl-sn-glycerol + ATP = 1-octadecanoyl-2-(9Z,12Z-octadecadienoyl)-sn-glycero-3-phosphate + ADP + H(+)</text>
        <dbReference type="Rhea" id="RHEA:40339"/>
        <dbReference type="ChEBI" id="CHEBI:15378"/>
        <dbReference type="ChEBI" id="CHEBI:30616"/>
        <dbReference type="ChEBI" id="CHEBI:77097"/>
        <dbReference type="ChEBI" id="CHEBI:77098"/>
        <dbReference type="ChEBI" id="CHEBI:456216"/>
    </reaction>
    <physiologicalReaction direction="left-to-right" evidence="2">
        <dbReference type="Rhea" id="RHEA:40340"/>
    </physiologicalReaction>
</comment>
<comment type="pathway">
    <text evidence="10">Lipid metabolism; glycerolipid metabolism.</text>
</comment>
<comment type="subunit">
    <text evidence="1 2 8">Interacts (via PDZ-binding motif) with DLG4; controls the localization of DGKI to the synapse (PubMed:21119615). Interacts (via PDZ-binding motif) with DLG1 (By similarity). Interacts (via PDZ-binding motif) with DLG2 (By similarity). Interacts (via PDZ-binding motif) with DLG3 (By similarity). May interact with RASGRP3; involved in the regulation of RASGRP3 activity (By similarity).</text>
</comment>
<comment type="interaction">
    <interactant intactId="EBI-1765520">
        <id>O75912</id>
    </interactant>
    <interactant intactId="EBI-301270">
        <id>P40337-3</id>
        <label>VHL</label>
    </interactant>
    <organismsDiffer>false</organismsDiffer>
    <experiments>3</experiments>
</comment>
<comment type="subcellular location">
    <subcellularLocation>
        <location evidence="2">Cell projection</location>
        <location evidence="2">Axon</location>
    </subcellularLocation>
    <subcellularLocation>
        <location evidence="2">Cell projection</location>
        <location evidence="2">Dendrite</location>
    </subcellularLocation>
    <subcellularLocation>
        <location evidence="2">Presynapse</location>
    </subcellularLocation>
    <subcellularLocation>
        <location evidence="2">Postsynapse</location>
    </subcellularLocation>
    <subcellularLocation>
        <location evidence="2">Postsynaptic density</location>
    </subcellularLocation>
    <subcellularLocation>
        <location evidence="2">Synaptic cell membrane</location>
    </subcellularLocation>
    <subcellularLocation>
        <location evidence="2">Cytoplasmic vesicle</location>
        <location evidence="2">Secretory vesicle</location>
        <location evidence="2">Synaptic vesicle membrane</location>
    </subcellularLocation>
    <subcellularLocation>
        <location evidence="10">Cytoplasm</location>
        <location evidence="10">Cytosol</location>
    </subcellularLocation>
    <subcellularLocation>
        <location evidence="10">Nucleus</location>
    </subcellularLocation>
    <text evidence="2 10">Excluded from inhibitory synapses (By similarity). Localization between cytoplasm and nucleus is regulated by protein kinase C (PubMed:9830018). Both in the detergent soluble and particulate fractions (By similarity).</text>
</comment>
<comment type="alternative products">
    <event type="alternative splicing"/>
    <isoform>
        <id>O75912-2</id>
        <name>2</name>
        <sequence type="displayed"/>
    </isoform>
    <isoform>
        <id>O75912-1</id>
        <name>1</name>
        <sequence type="described" ref="VSP_062484 VSP_062485"/>
    </isoform>
</comment>
<comment type="tissue specificity">
    <text evidence="7 10">Specifically expressed in brain and retina (PubMed:9830018). In brain, highly expressed in hippocampus, caudate nucleus, occipital pole, cerebral cortex, and cerebellum (PubMed:9830018). Also detected in kidney (PubMed:15894621).</text>
</comment>
<comment type="similarity">
    <text evidence="12">Belongs to the eukaryotic diacylglycerol kinase family.</text>
</comment>
<dbReference type="EC" id="2.7.1.107" evidence="9 10"/>
<dbReference type="EMBL" id="AF061936">
    <property type="protein sequence ID" value="AAC62010.1"/>
    <property type="molecule type" value="mRNA"/>
</dbReference>
<dbReference type="EMBL" id="AC009179">
    <property type="status" value="NOT_ANNOTATED_CDS"/>
    <property type="molecule type" value="Genomic_DNA"/>
</dbReference>
<dbReference type="EMBL" id="KF458620">
    <property type="status" value="NOT_ANNOTATED_CDS"/>
    <property type="molecule type" value="Genomic_DNA"/>
</dbReference>
<dbReference type="EMBL" id="AC090498">
    <property type="status" value="NOT_ANNOTATED_CDS"/>
    <property type="molecule type" value="Genomic_DNA"/>
</dbReference>
<dbReference type="EMBL" id="AC009245">
    <property type="status" value="NOT_ANNOTATED_CDS"/>
    <property type="molecule type" value="Genomic_DNA"/>
</dbReference>
<dbReference type="EMBL" id="AC078842">
    <property type="status" value="NOT_ANNOTATED_CDS"/>
    <property type="molecule type" value="Genomic_DNA"/>
</dbReference>
<dbReference type="EMBL" id="KF454918">
    <property type="status" value="NOT_ANNOTATED_CDS"/>
    <property type="molecule type" value="Genomic_DNA"/>
</dbReference>
<dbReference type="EMBL" id="KF458619">
    <property type="status" value="NOT_ANNOTATED_CDS"/>
    <property type="molecule type" value="Genomic_DNA"/>
</dbReference>
<dbReference type="EMBL" id="CH236950">
    <property type="protein sequence ID" value="EAL24051.1"/>
    <property type="molecule type" value="Genomic_DNA"/>
</dbReference>
<dbReference type="EMBL" id="AH009185">
    <property type="protein sequence ID" value="AAF43006.1"/>
    <property type="molecule type" value="Genomic_DNA"/>
</dbReference>
<dbReference type="CCDS" id="CCDS5845.1">
    <molecule id="O75912-1"/>
</dbReference>
<dbReference type="CCDS" id="CCDS94212.1">
    <molecule id="O75912-2"/>
</dbReference>
<dbReference type="RefSeq" id="NP_001308637.1">
    <molecule id="O75912-2"/>
    <property type="nucleotide sequence ID" value="NM_001321708.2"/>
</dbReference>
<dbReference type="RefSeq" id="NP_001308638.1">
    <property type="nucleotide sequence ID" value="NM_001321709.1"/>
</dbReference>
<dbReference type="RefSeq" id="NP_001308639.1">
    <property type="nucleotide sequence ID" value="NM_001321710.1"/>
</dbReference>
<dbReference type="RefSeq" id="NP_004708.1">
    <molecule id="O75912-1"/>
    <property type="nucleotide sequence ID" value="NM_004717.3"/>
</dbReference>
<dbReference type="SMR" id="O75912"/>
<dbReference type="BioGRID" id="114605">
    <property type="interactions" value="7"/>
</dbReference>
<dbReference type="FunCoup" id="O75912">
    <property type="interactions" value="1137"/>
</dbReference>
<dbReference type="IntAct" id="O75912">
    <property type="interactions" value="3"/>
</dbReference>
<dbReference type="STRING" id="9606.ENSP00000288490"/>
<dbReference type="BindingDB" id="O75912"/>
<dbReference type="ChEMBL" id="CHEMBL5465280"/>
<dbReference type="DrugBank" id="DB14001">
    <property type="generic name" value="alpha-Tocopherol succinate"/>
</dbReference>
<dbReference type="SwissLipids" id="SLP:000000925"/>
<dbReference type="iPTMnet" id="O75912"/>
<dbReference type="PhosphoSitePlus" id="O75912"/>
<dbReference type="BioMuta" id="DGKI"/>
<dbReference type="jPOST" id="O75912"/>
<dbReference type="MassIVE" id="O75912"/>
<dbReference type="PaxDb" id="9606-ENSP00000288490"/>
<dbReference type="PeptideAtlas" id="O75912"/>
<dbReference type="ProteomicsDB" id="50265"/>
<dbReference type="Antibodypedia" id="32299">
    <property type="antibodies" value="187 antibodies from 29 providers"/>
</dbReference>
<dbReference type="DNASU" id="9162"/>
<dbReference type="Ensembl" id="ENST00000288490.9">
    <molecule id="O75912-1"/>
    <property type="protein sequence ID" value="ENSP00000288490.4"/>
    <property type="gene ID" value="ENSG00000157680.17"/>
</dbReference>
<dbReference type="Ensembl" id="ENST00000614521.2">
    <molecule id="O75912-2"/>
    <property type="protein sequence ID" value="ENSP00000479053.2"/>
    <property type="gene ID" value="ENSG00000157680.17"/>
</dbReference>
<dbReference type="GeneID" id="9162"/>
<dbReference type="KEGG" id="hsa:9162"/>
<dbReference type="MANE-Select" id="ENST00000614521.2">
    <property type="protein sequence ID" value="ENSP00000479053.2"/>
    <property type="RefSeq nucleotide sequence ID" value="NM_001321708.2"/>
    <property type="RefSeq protein sequence ID" value="NP_001308637.1"/>
</dbReference>
<dbReference type="UCSC" id="uc003vtt.4">
    <molecule id="O75912-2"/>
    <property type="organism name" value="human"/>
</dbReference>
<dbReference type="AGR" id="HGNC:2855"/>
<dbReference type="CTD" id="9162"/>
<dbReference type="DisGeNET" id="9162"/>
<dbReference type="GeneCards" id="DGKI"/>
<dbReference type="HGNC" id="HGNC:2855">
    <property type="gene designation" value="DGKI"/>
</dbReference>
<dbReference type="HPA" id="ENSG00000157680">
    <property type="expression patterns" value="Tissue enhanced (choroid plexus, retina, thyroid gland)"/>
</dbReference>
<dbReference type="MIM" id="604072">
    <property type="type" value="gene"/>
</dbReference>
<dbReference type="neXtProt" id="NX_O75912"/>
<dbReference type="OpenTargets" id="ENSG00000157680"/>
<dbReference type="PharmGKB" id="PA27316"/>
<dbReference type="VEuPathDB" id="HostDB:ENSG00000157680"/>
<dbReference type="eggNOG" id="KOG0782">
    <property type="taxonomic scope" value="Eukaryota"/>
</dbReference>
<dbReference type="GeneTree" id="ENSGT00940000158094"/>
<dbReference type="InParanoid" id="O75912"/>
<dbReference type="OrthoDB" id="242257at2759"/>
<dbReference type="PAN-GO" id="O75912">
    <property type="GO annotations" value="6 GO annotations based on evolutionary models"/>
</dbReference>
<dbReference type="PhylomeDB" id="O75912"/>
<dbReference type="TreeFam" id="TF312817"/>
<dbReference type="BRENDA" id="2.7.1.107">
    <property type="organism ID" value="2681"/>
</dbReference>
<dbReference type="PathwayCommons" id="O75912"/>
<dbReference type="Reactome" id="R-HSA-114508">
    <property type="pathway name" value="Effects of PIP2 hydrolysis"/>
</dbReference>
<dbReference type="SignaLink" id="O75912"/>
<dbReference type="UniPathway" id="UPA00230"/>
<dbReference type="BioGRID-ORCS" id="9162">
    <property type="hits" value="20 hits in 1160 CRISPR screens"/>
</dbReference>
<dbReference type="ChiTaRS" id="DGKI">
    <property type="organism name" value="human"/>
</dbReference>
<dbReference type="GenomeRNAi" id="9162"/>
<dbReference type="Pharos" id="O75912">
    <property type="development level" value="Tbio"/>
</dbReference>
<dbReference type="PRO" id="PR:O75912"/>
<dbReference type="Proteomes" id="UP000005640">
    <property type="component" value="Chromosome 7"/>
</dbReference>
<dbReference type="RNAct" id="O75912">
    <property type="molecule type" value="protein"/>
</dbReference>
<dbReference type="Bgee" id="ENSG00000157680">
    <property type="expression patterns" value="Expressed in cortical plate and 128 other cell types or tissues"/>
</dbReference>
<dbReference type="ExpressionAtlas" id="O75912">
    <property type="expression patterns" value="baseline and differential"/>
</dbReference>
<dbReference type="GO" id="GO:0030424">
    <property type="term" value="C:axon"/>
    <property type="evidence" value="ECO:0007669"/>
    <property type="project" value="UniProtKB-SubCell"/>
</dbReference>
<dbReference type="GO" id="GO:0005737">
    <property type="term" value="C:cytoplasm"/>
    <property type="evidence" value="ECO:0000314"/>
    <property type="project" value="BHF-UCL"/>
</dbReference>
<dbReference type="GO" id="GO:0005829">
    <property type="term" value="C:cytosol"/>
    <property type="evidence" value="ECO:0007669"/>
    <property type="project" value="UniProtKB-SubCell"/>
</dbReference>
<dbReference type="GO" id="GO:0043197">
    <property type="term" value="C:dendritic spine"/>
    <property type="evidence" value="ECO:0000314"/>
    <property type="project" value="MGI"/>
</dbReference>
<dbReference type="GO" id="GO:0098978">
    <property type="term" value="C:glutamatergic synapse"/>
    <property type="evidence" value="ECO:0000318"/>
    <property type="project" value="GO_Central"/>
</dbReference>
<dbReference type="GO" id="GO:0005634">
    <property type="term" value="C:nucleus"/>
    <property type="evidence" value="ECO:0000314"/>
    <property type="project" value="BHF-UCL"/>
</dbReference>
<dbReference type="GO" id="GO:0005886">
    <property type="term" value="C:plasma membrane"/>
    <property type="evidence" value="ECO:0000318"/>
    <property type="project" value="GO_Central"/>
</dbReference>
<dbReference type="GO" id="GO:0014069">
    <property type="term" value="C:postsynaptic density"/>
    <property type="evidence" value="ECO:0007669"/>
    <property type="project" value="UniProtKB-SubCell"/>
</dbReference>
<dbReference type="GO" id="GO:0032991">
    <property type="term" value="C:protein-containing complex"/>
    <property type="evidence" value="ECO:0000314"/>
    <property type="project" value="MGI"/>
</dbReference>
<dbReference type="GO" id="GO:0045202">
    <property type="term" value="C:synapse"/>
    <property type="evidence" value="ECO:0000314"/>
    <property type="project" value="MGI"/>
</dbReference>
<dbReference type="GO" id="GO:0097060">
    <property type="term" value="C:synaptic membrane"/>
    <property type="evidence" value="ECO:0007669"/>
    <property type="project" value="UniProtKB-SubCell"/>
</dbReference>
<dbReference type="GO" id="GO:0030672">
    <property type="term" value="C:synaptic vesicle membrane"/>
    <property type="evidence" value="ECO:0007669"/>
    <property type="project" value="UniProtKB-SubCell"/>
</dbReference>
<dbReference type="GO" id="GO:0005524">
    <property type="term" value="F:ATP binding"/>
    <property type="evidence" value="ECO:0007669"/>
    <property type="project" value="UniProtKB-KW"/>
</dbReference>
<dbReference type="GO" id="GO:0004143">
    <property type="term" value="F:ATP-dependent diacylglycerol kinase activity"/>
    <property type="evidence" value="ECO:0000314"/>
    <property type="project" value="BHF-UCL"/>
</dbReference>
<dbReference type="GO" id="GO:0046339">
    <property type="term" value="P:diacylglycerol metabolic process"/>
    <property type="evidence" value="ECO:0000318"/>
    <property type="project" value="GO_Central"/>
</dbReference>
<dbReference type="GO" id="GO:0035556">
    <property type="term" value="P:intracellular signal transduction"/>
    <property type="evidence" value="ECO:0000318"/>
    <property type="project" value="GO_Central"/>
</dbReference>
<dbReference type="GO" id="GO:0046834">
    <property type="term" value="P:lipid phosphorylation"/>
    <property type="evidence" value="ECO:0000314"/>
    <property type="project" value="BHF-UCL"/>
</dbReference>
<dbReference type="GO" id="GO:0006654">
    <property type="term" value="P:phosphatidic acid biosynthetic process"/>
    <property type="evidence" value="ECO:0000318"/>
    <property type="project" value="GO_Central"/>
</dbReference>
<dbReference type="GO" id="GO:0007200">
    <property type="term" value="P:phospholipase C-activating G protein-coupled receptor signaling pathway"/>
    <property type="evidence" value="ECO:0007669"/>
    <property type="project" value="InterPro"/>
</dbReference>
<dbReference type="GO" id="GO:0030168">
    <property type="term" value="P:platelet activation"/>
    <property type="evidence" value="ECO:0000304"/>
    <property type="project" value="Reactome"/>
</dbReference>
<dbReference type="CDD" id="cd20850">
    <property type="entry name" value="C1_DGKiota_rpt1"/>
    <property type="match status" value="1"/>
</dbReference>
<dbReference type="CDD" id="cd20896">
    <property type="entry name" value="C1_DGKiota_rpt2"/>
    <property type="match status" value="1"/>
</dbReference>
<dbReference type="FunFam" id="1.25.40.20:FF:000061">
    <property type="entry name" value="Diacylglycerol kinase"/>
    <property type="match status" value="1"/>
</dbReference>
<dbReference type="FunFam" id="2.60.200.40:FF:000002">
    <property type="entry name" value="Diacylglycerol kinase"/>
    <property type="match status" value="1"/>
</dbReference>
<dbReference type="FunFam" id="3.30.60.20:FF:000035">
    <property type="entry name" value="Diacylglycerol kinase"/>
    <property type="match status" value="1"/>
</dbReference>
<dbReference type="FunFam" id="3.40.50.10330:FF:000002">
    <property type="entry name" value="Diacylglycerol kinase"/>
    <property type="match status" value="1"/>
</dbReference>
<dbReference type="Gene3D" id="2.60.200.40">
    <property type="match status" value="1"/>
</dbReference>
<dbReference type="Gene3D" id="3.30.60.20">
    <property type="match status" value="1"/>
</dbReference>
<dbReference type="Gene3D" id="1.25.40.20">
    <property type="entry name" value="Ankyrin repeat-containing domain"/>
    <property type="match status" value="1"/>
</dbReference>
<dbReference type="Gene3D" id="3.40.50.10330">
    <property type="entry name" value="Probable inorganic polyphosphate/atp-NAD kinase, domain 1"/>
    <property type="match status" value="1"/>
</dbReference>
<dbReference type="InterPro" id="IPR002110">
    <property type="entry name" value="Ankyrin_rpt"/>
</dbReference>
<dbReference type="InterPro" id="IPR036770">
    <property type="entry name" value="Ankyrin_rpt-contain_sf"/>
</dbReference>
<dbReference type="InterPro" id="IPR017438">
    <property type="entry name" value="ATP-NAD_kinase_N"/>
</dbReference>
<dbReference type="InterPro" id="IPR047486">
    <property type="entry name" value="C1_DGKiota_rpt1"/>
</dbReference>
<dbReference type="InterPro" id="IPR047487">
    <property type="entry name" value="C1_DGKiota_rpt2"/>
</dbReference>
<dbReference type="InterPro" id="IPR037607">
    <property type="entry name" value="DGK"/>
</dbReference>
<dbReference type="InterPro" id="IPR056383">
    <property type="entry name" value="DGKI-like_dom"/>
</dbReference>
<dbReference type="InterPro" id="IPR000756">
    <property type="entry name" value="Diacylglycerol_kin_accessory"/>
</dbReference>
<dbReference type="InterPro" id="IPR001206">
    <property type="entry name" value="Diacylglycerol_kinase_cat_dom"/>
</dbReference>
<dbReference type="InterPro" id="IPR016064">
    <property type="entry name" value="NAD/diacylglycerol_kinase_sf"/>
</dbReference>
<dbReference type="InterPro" id="IPR002219">
    <property type="entry name" value="PE/DAG-bd"/>
</dbReference>
<dbReference type="PANTHER" id="PTHR11255">
    <property type="entry name" value="DIACYLGLYCEROL KINASE"/>
    <property type="match status" value="1"/>
</dbReference>
<dbReference type="PANTHER" id="PTHR11255:SF92">
    <property type="entry name" value="DIACYLGLYCEROL KINASE IOTA"/>
    <property type="match status" value="1"/>
</dbReference>
<dbReference type="Pfam" id="PF12796">
    <property type="entry name" value="Ank_2"/>
    <property type="match status" value="1"/>
</dbReference>
<dbReference type="Pfam" id="PF00130">
    <property type="entry name" value="C1_1"/>
    <property type="match status" value="1"/>
</dbReference>
<dbReference type="Pfam" id="PF00609">
    <property type="entry name" value="DAGK_acc"/>
    <property type="match status" value="1"/>
</dbReference>
<dbReference type="Pfam" id="PF00781">
    <property type="entry name" value="DAGK_cat"/>
    <property type="match status" value="1"/>
</dbReference>
<dbReference type="Pfam" id="PF23578">
    <property type="entry name" value="DGKI"/>
    <property type="match status" value="1"/>
</dbReference>
<dbReference type="SMART" id="SM00248">
    <property type="entry name" value="ANK"/>
    <property type="match status" value="2"/>
</dbReference>
<dbReference type="SMART" id="SM00109">
    <property type="entry name" value="C1"/>
    <property type="match status" value="2"/>
</dbReference>
<dbReference type="SMART" id="SM00045">
    <property type="entry name" value="DAGKa"/>
    <property type="match status" value="1"/>
</dbReference>
<dbReference type="SMART" id="SM00046">
    <property type="entry name" value="DAGKc"/>
    <property type="match status" value="1"/>
</dbReference>
<dbReference type="SUPFAM" id="SSF48403">
    <property type="entry name" value="Ankyrin repeat"/>
    <property type="match status" value="1"/>
</dbReference>
<dbReference type="SUPFAM" id="SSF111331">
    <property type="entry name" value="NAD kinase/diacylglycerol kinase-like"/>
    <property type="match status" value="1"/>
</dbReference>
<dbReference type="PROSITE" id="PS50297">
    <property type="entry name" value="ANK_REP_REGION"/>
    <property type="match status" value="1"/>
</dbReference>
<dbReference type="PROSITE" id="PS50088">
    <property type="entry name" value="ANK_REPEAT"/>
    <property type="match status" value="2"/>
</dbReference>
<dbReference type="PROSITE" id="PS50146">
    <property type="entry name" value="DAGK"/>
    <property type="match status" value="1"/>
</dbReference>